<evidence type="ECO:0000255" key="1">
    <source>
        <dbReference type="HAMAP-Rule" id="MF_00249"/>
    </source>
</evidence>
<evidence type="ECO:0000256" key="2">
    <source>
        <dbReference type="SAM" id="MobiDB-lite"/>
    </source>
</evidence>
<sequence length="455" mass="51237">MTQIMTPKTIVHELERHIIGQNDAKKAVAIALRNRWRRMQLDNEMRQEVTPKNILMIGPTGVGKTEIARRLAKLADAPFIKVEATKFTEVGYVGKDVESIIRDLVETAVKMKREEAKEKVTEKAARLAEDRILDVLIPPARTSESKVGFANEPAEDAASKKEKENKTREIFRKKIQNGELDDKEIEIEVAVAPKTIGVMGPPGMEDMTSQLQDLFSSLSTDKKKNKKMRIKDAIKLAQDEEAAKLVNEEDIKARALEAVEQNGIVFLDEIDKVCRKSSNSGADVSREGVQRDLLPLVEGSTVSTKYGVIKTDHILFIASGAFHVAKPSDLIPELQGRLPIRVELKSLEIEDFVRILREPDCSILKQYIALMKTEGIDLSFEEDAIRKIAEIAYKVNEEVENIGARRLHTVMERLLEKISFDAPELVEKNINITTDYVNEKLGNLVKNKDLSQYIL</sequence>
<proteinExistence type="inferred from homology"/>
<accession>Q2A3M7</accession>
<dbReference type="EMBL" id="AM233362">
    <property type="protein sequence ID" value="CAJ79403.1"/>
    <property type="molecule type" value="Genomic_DNA"/>
</dbReference>
<dbReference type="RefSeq" id="WP_003015770.1">
    <property type="nucleotide sequence ID" value="NZ_CP009694.1"/>
</dbReference>
<dbReference type="SMR" id="Q2A3M7"/>
<dbReference type="KEGG" id="ftl:FTL_0964"/>
<dbReference type="Proteomes" id="UP000001944">
    <property type="component" value="Chromosome"/>
</dbReference>
<dbReference type="GO" id="GO:0009376">
    <property type="term" value="C:HslUV protease complex"/>
    <property type="evidence" value="ECO:0007669"/>
    <property type="project" value="UniProtKB-UniRule"/>
</dbReference>
<dbReference type="GO" id="GO:0005524">
    <property type="term" value="F:ATP binding"/>
    <property type="evidence" value="ECO:0007669"/>
    <property type="project" value="UniProtKB-UniRule"/>
</dbReference>
<dbReference type="GO" id="GO:0016887">
    <property type="term" value="F:ATP hydrolysis activity"/>
    <property type="evidence" value="ECO:0007669"/>
    <property type="project" value="InterPro"/>
</dbReference>
<dbReference type="GO" id="GO:0008233">
    <property type="term" value="F:peptidase activity"/>
    <property type="evidence" value="ECO:0007669"/>
    <property type="project" value="InterPro"/>
</dbReference>
<dbReference type="GO" id="GO:0036402">
    <property type="term" value="F:proteasome-activating activity"/>
    <property type="evidence" value="ECO:0007669"/>
    <property type="project" value="UniProtKB-UniRule"/>
</dbReference>
<dbReference type="GO" id="GO:0043335">
    <property type="term" value="P:protein unfolding"/>
    <property type="evidence" value="ECO:0007669"/>
    <property type="project" value="UniProtKB-UniRule"/>
</dbReference>
<dbReference type="GO" id="GO:0051603">
    <property type="term" value="P:proteolysis involved in protein catabolic process"/>
    <property type="evidence" value="ECO:0007669"/>
    <property type="project" value="TreeGrafter"/>
</dbReference>
<dbReference type="CDD" id="cd19498">
    <property type="entry name" value="RecA-like_HslU"/>
    <property type="match status" value="1"/>
</dbReference>
<dbReference type="FunFam" id="3.40.50.300:FF:000213">
    <property type="entry name" value="ATP-dependent protease ATPase subunit HslU"/>
    <property type="match status" value="1"/>
</dbReference>
<dbReference type="FunFam" id="3.40.50.300:FF:000220">
    <property type="entry name" value="ATP-dependent protease ATPase subunit HslU"/>
    <property type="match status" value="1"/>
</dbReference>
<dbReference type="Gene3D" id="1.10.8.60">
    <property type="match status" value="1"/>
</dbReference>
<dbReference type="Gene3D" id="3.40.50.300">
    <property type="entry name" value="P-loop containing nucleotide triphosphate hydrolases"/>
    <property type="match status" value="2"/>
</dbReference>
<dbReference type="HAMAP" id="MF_00249">
    <property type="entry name" value="HslU"/>
    <property type="match status" value="1"/>
</dbReference>
<dbReference type="InterPro" id="IPR003593">
    <property type="entry name" value="AAA+_ATPase"/>
</dbReference>
<dbReference type="InterPro" id="IPR050052">
    <property type="entry name" value="ATP-dep_Clp_protease_ClpX"/>
</dbReference>
<dbReference type="InterPro" id="IPR003959">
    <property type="entry name" value="ATPase_AAA_core"/>
</dbReference>
<dbReference type="InterPro" id="IPR019489">
    <property type="entry name" value="Clp_ATPase_C"/>
</dbReference>
<dbReference type="InterPro" id="IPR004491">
    <property type="entry name" value="HslU"/>
</dbReference>
<dbReference type="InterPro" id="IPR027417">
    <property type="entry name" value="P-loop_NTPase"/>
</dbReference>
<dbReference type="NCBIfam" id="TIGR00390">
    <property type="entry name" value="hslU"/>
    <property type="match status" value="1"/>
</dbReference>
<dbReference type="NCBIfam" id="NF003544">
    <property type="entry name" value="PRK05201.1"/>
    <property type="match status" value="1"/>
</dbReference>
<dbReference type="PANTHER" id="PTHR48102">
    <property type="entry name" value="ATP-DEPENDENT CLP PROTEASE ATP-BINDING SUBUNIT CLPX-LIKE, MITOCHONDRIAL-RELATED"/>
    <property type="match status" value="1"/>
</dbReference>
<dbReference type="PANTHER" id="PTHR48102:SF3">
    <property type="entry name" value="ATP-DEPENDENT PROTEASE ATPASE SUBUNIT HSLU"/>
    <property type="match status" value="1"/>
</dbReference>
<dbReference type="Pfam" id="PF00004">
    <property type="entry name" value="AAA"/>
    <property type="match status" value="1"/>
</dbReference>
<dbReference type="Pfam" id="PF07724">
    <property type="entry name" value="AAA_2"/>
    <property type="match status" value="1"/>
</dbReference>
<dbReference type="SMART" id="SM00382">
    <property type="entry name" value="AAA"/>
    <property type="match status" value="1"/>
</dbReference>
<dbReference type="SMART" id="SM01086">
    <property type="entry name" value="ClpB_D2-small"/>
    <property type="match status" value="1"/>
</dbReference>
<dbReference type="SUPFAM" id="SSF52540">
    <property type="entry name" value="P-loop containing nucleoside triphosphate hydrolases"/>
    <property type="match status" value="1"/>
</dbReference>
<keyword id="KW-0067">ATP-binding</keyword>
<keyword id="KW-0143">Chaperone</keyword>
<keyword id="KW-0963">Cytoplasm</keyword>
<keyword id="KW-0547">Nucleotide-binding</keyword>
<keyword id="KW-1185">Reference proteome</keyword>
<feature type="chain" id="PRO_1000012740" description="ATP-dependent protease ATPase subunit HslU">
    <location>
        <begin position="1"/>
        <end position="455"/>
    </location>
</feature>
<feature type="region of interest" description="Disordered" evidence="2">
    <location>
        <begin position="144"/>
        <end position="163"/>
    </location>
</feature>
<feature type="binding site" evidence="1">
    <location>
        <position position="19"/>
    </location>
    <ligand>
        <name>ATP</name>
        <dbReference type="ChEBI" id="CHEBI:30616"/>
    </ligand>
</feature>
<feature type="binding site" evidence="1">
    <location>
        <begin position="61"/>
        <end position="66"/>
    </location>
    <ligand>
        <name>ATP</name>
        <dbReference type="ChEBI" id="CHEBI:30616"/>
    </ligand>
</feature>
<feature type="binding site" evidence="1">
    <location>
        <position position="268"/>
    </location>
    <ligand>
        <name>ATP</name>
        <dbReference type="ChEBI" id="CHEBI:30616"/>
    </ligand>
</feature>
<feature type="binding site" evidence="1">
    <location>
        <position position="333"/>
    </location>
    <ligand>
        <name>ATP</name>
        <dbReference type="ChEBI" id="CHEBI:30616"/>
    </ligand>
</feature>
<feature type="binding site" evidence="1">
    <location>
        <position position="405"/>
    </location>
    <ligand>
        <name>ATP</name>
        <dbReference type="ChEBI" id="CHEBI:30616"/>
    </ligand>
</feature>
<name>HSLU_FRATH</name>
<comment type="function">
    <text evidence="1">ATPase subunit of a proteasome-like degradation complex; this subunit has chaperone activity. The binding of ATP and its subsequent hydrolysis by HslU are essential for unfolding of protein substrates subsequently hydrolyzed by HslV. HslU recognizes the N-terminal part of its protein substrates and unfolds these before they are guided to HslV for hydrolysis.</text>
</comment>
<comment type="subunit">
    <text evidence="1">A double ring-shaped homohexamer of HslV is capped on each side by a ring-shaped HslU homohexamer. The assembly of the HslU/HslV complex is dependent on binding of ATP.</text>
</comment>
<comment type="subcellular location">
    <subcellularLocation>
        <location evidence="1">Cytoplasm</location>
    </subcellularLocation>
</comment>
<comment type="similarity">
    <text evidence="1">Belongs to the ClpX chaperone family. HslU subfamily.</text>
</comment>
<reference key="1">
    <citation type="submission" date="2006-03" db="EMBL/GenBank/DDBJ databases">
        <title>Complete genome sequence of Francisella tularensis LVS (Live Vaccine Strain).</title>
        <authorList>
            <person name="Chain P."/>
            <person name="Larimer F."/>
            <person name="Land M."/>
            <person name="Stilwagen S."/>
            <person name="Larsson P."/>
            <person name="Bearden S."/>
            <person name="Chu M."/>
            <person name="Oyston P."/>
            <person name="Forsman M."/>
            <person name="Andersson S."/>
            <person name="Lindler L."/>
            <person name="Titball R."/>
            <person name="Garcia E."/>
        </authorList>
    </citation>
    <scope>NUCLEOTIDE SEQUENCE [LARGE SCALE GENOMIC DNA]</scope>
    <source>
        <strain>LVS</strain>
    </source>
</reference>
<organism>
    <name type="scientific">Francisella tularensis subsp. holarctica (strain LVS)</name>
    <dbReference type="NCBI Taxonomy" id="376619"/>
    <lineage>
        <taxon>Bacteria</taxon>
        <taxon>Pseudomonadati</taxon>
        <taxon>Pseudomonadota</taxon>
        <taxon>Gammaproteobacteria</taxon>
        <taxon>Thiotrichales</taxon>
        <taxon>Francisellaceae</taxon>
        <taxon>Francisella</taxon>
    </lineage>
</organism>
<gene>
    <name evidence="1" type="primary">hslU</name>
    <name type="ordered locus">FTL_0964</name>
</gene>
<protein>
    <recommendedName>
        <fullName evidence="1">ATP-dependent protease ATPase subunit HslU</fullName>
    </recommendedName>
    <alternativeName>
        <fullName evidence="1">Unfoldase HslU</fullName>
    </alternativeName>
</protein>